<comment type="function">
    <text evidence="1">Catalyzes the isomerization between 2-isopropylmalate and 3-isopropylmalate, via the formation of 2-isopropylmaleate.</text>
</comment>
<comment type="catalytic activity">
    <reaction evidence="1">
        <text>(2R,3S)-3-isopropylmalate = (2S)-2-isopropylmalate</text>
        <dbReference type="Rhea" id="RHEA:32287"/>
        <dbReference type="ChEBI" id="CHEBI:1178"/>
        <dbReference type="ChEBI" id="CHEBI:35121"/>
        <dbReference type="EC" id="4.2.1.33"/>
    </reaction>
</comment>
<comment type="cofactor">
    <cofactor evidence="1">
        <name>[4Fe-4S] cluster</name>
        <dbReference type="ChEBI" id="CHEBI:49883"/>
    </cofactor>
    <text evidence="1">Binds 1 [4Fe-4S] cluster per subunit.</text>
</comment>
<comment type="pathway">
    <text evidence="1">Amino-acid biosynthesis; L-leucine biosynthesis; L-leucine from 3-methyl-2-oxobutanoate: step 2/4.</text>
</comment>
<comment type="subunit">
    <text evidence="1">Heterodimer of LeuC and LeuD.</text>
</comment>
<comment type="similarity">
    <text evidence="1">Belongs to the aconitase/IPM isomerase family. LeuC type 2 subfamily.</text>
</comment>
<organism>
    <name type="scientific">Caldicellulosiruptor saccharolyticus (strain ATCC 43494 / DSM 8903 / Tp8T 6331)</name>
    <dbReference type="NCBI Taxonomy" id="351627"/>
    <lineage>
        <taxon>Bacteria</taxon>
        <taxon>Bacillati</taxon>
        <taxon>Bacillota</taxon>
        <taxon>Bacillota incertae sedis</taxon>
        <taxon>Caldicellulosiruptorales</taxon>
        <taxon>Caldicellulosiruptoraceae</taxon>
        <taxon>Caldicellulosiruptor</taxon>
    </lineage>
</organism>
<dbReference type="EC" id="4.2.1.33" evidence="1"/>
<dbReference type="EMBL" id="CP000679">
    <property type="protein sequence ID" value="ABP66933.1"/>
    <property type="molecule type" value="Genomic_DNA"/>
</dbReference>
<dbReference type="RefSeq" id="WP_011916868.1">
    <property type="nucleotide sequence ID" value="NC_009437.1"/>
</dbReference>
<dbReference type="SMR" id="A4XJ48"/>
<dbReference type="STRING" id="351627.Csac_1331"/>
<dbReference type="KEGG" id="csc:Csac_1331"/>
<dbReference type="eggNOG" id="COG0065">
    <property type="taxonomic scope" value="Bacteria"/>
</dbReference>
<dbReference type="HOGENOM" id="CLU_006714_3_4_9"/>
<dbReference type="OrthoDB" id="9764318at2"/>
<dbReference type="UniPathway" id="UPA00048">
    <property type="reaction ID" value="UER00071"/>
</dbReference>
<dbReference type="Proteomes" id="UP000000256">
    <property type="component" value="Chromosome"/>
</dbReference>
<dbReference type="GO" id="GO:0003861">
    <property type="term" value="F:3-isopropylmalate dehydratase activity"/>
    <property type="evidence" value="ECO:0007669"/>
    <property type="project" value="UniProtKB-UniRule"/>
</dbReference>
<dbReference type="GO" id="GO:0051539">
    <property type="term" value="F:4 iron, 4 sulfur cluster binding"/>
    <property type="evidence" value="ECO:0007669"/>
    <property type="project" value="UniProtKB-KW"/>
</dbReference>
<dbReference type="GO" id="GO:0046872">
    <property type="term" value="F:metal ion binding"/>
    <property type="evidence" value="ECO:0007669"/>
    <property type="project" value="UniProtKB-KW"/>
</dbReference>
<dbReference type="GO" id="GO:0009098">
    <property type="term" value="P:L-leucine biosynthetic process"/>
    <property type="evidence" value="ECO:0007669"/>
    <property type="project" value="UniProtKB-UniRule"/>
</dbReference>
<dbReference type="CDD" id="cd01583">
    <property type="entry name" value="IPMI"/>
    <property type="match status" value="1"/>
</dbReference>
<dbReference type="Gene3D" id="3.30.499.10">
    <property type="entry name" value="Aconitase, domain 3"/>
    <property type="match status" value="2"/>
</dbReference>
<dbReference type="HAMAP" id="MF_01027">
    <property type="entry name" value="LeuC_type2"/>
    <property type="match status" value="1"/>
</dbReference>
<dbReference type="InterPro" id="IPR015931">
    <property type="entry name" value="Acnase/IPM_dHydase_lsu_aba_1/3"/>
</dbReference>
<dbReference type="InterPro" id="IPR001030">
    <property type="entry name" value="Acoase/IPM_deHydtase_lsu_aba"/>
</dbReference>
<dbReference type="InterPro" id="IPR018136">
    <property type="entry name" value="Aconitase_4Fe-4S_BS"/>
</dbReference>
<dbReference type="InterPro" id="IPR036008">
    <property type="entry name" value="Aconitase_4Fe-4S_dom"/>
</dbReference>
<dbReference type="InterPro" id="IPR011826">
    <property type="entry name" value="HAcnase/IPMdehydase_lsu_prok"/>
</dbReference>
<dbReference type="InterPro" id="IPR006251">
    <property type="entry name" value="Homoacnase/IPMdehydase_lsu"/>
</dbReference>
<dbReference type="InterPro" id="IPR050067">
    <property type="entry name" value="IPM_dehydratase_rel_enz"/>
</dbReference>
<dbReference type="InterPro" id="IPR033941">
    <property type="entry name" value="IPMI_cat"/>
</dbReference>
<dbReference type="InterPro" id="IPR011823">
    <property type="entry name" value="IsopropMal_deHydtase_lsu_bac"/>
</dbReference>
<dbReference type="NCBIfam" id="TIGR01343">
    <property type="entry name" value="hacA_fam"/>
    <property type="match status" value="1"/>
</dbReference>
<dbReference type="NCBIfam" id="TIGR02086">
    <property type="entry name" value="IPMI_arch"/>
    <property type="match status" value="1"/>
</dbReference>
<dbReference type="NCBIfam" id="TIGR02083">
    <property type="entry name" value="LEU2"/>
    <property type="match status" value="1"/>
</dbReference>
<dbReference type="NCBIfam" id="NF001614">
    <property type="entry name" value="PRK00402.1"/>
    <property type="match status" value="1"/>
</dbReference>
<dbReference type="PANTHER" id="PTHR43822:SF16">
    <property type="entry name" value="3-ISOPROPYLMALATE DEHYDRATASE LARGE SUBUNIT 2"/>
    <property type="match status" value="1"/>
</dbReference>
<dbReference type="PANTHER" id="PTHR43822">
    <property type="entry name" value="HOMOACONITASE, MITOCHONDRIAL-RELATED"/>
    <property type="match status" value="1"/>
</dbReference>
<dbReference type="Pfam" id="PF00330">
    <property type="entry name" value="Aconitase"/>
    <property type="match status" value="1"/>
</dbReference>
<dbReference type="PRINTS" id="PR00415">
    <property type="entry name" value="ACONITASE"/>
</dbReference>
<dbReference type="SUPFAM" id="SSF53732">
    <property type="entry name" value="Aconitase iron-sulfur domain"/>
    <property type="match status" value="1"/>
</dbReference>
<dbReference type="PROSITE" id="PS00450">
    <property type="entry name" value="ACONITASE_1"/>
    <property type="match status" value="1"/>
</dbReference>
<dbReference type="PROSITE" id="PS01244">
    <property type="entry name" value="ACONITASE_2"/>
    <property type="match status" value="1"/>
</dbReference>
<name>LEUC_CALS8</name>
<reference key="1">
    <citation type="submission" date="2007-04" db="EMBL/GenBank/DDBJ databases">
        <title>Genome sequence of the thermophilic hydrogen-producing bacterium Caldicellulosiruptor saccharolyticus DSM 8903.</title>
        <authorList>
            <person name="Copeland A."/>
            <person name="Lucas S."/>
            <person name="Lapidus A."/>
            <person name="Barry K."/>
            <person name="Detter J.C."/>
            <person name="Glavina del Rio T."/>
            <person name="Hammon N."/>
            <person name="Israni S."/>
            <person name="Dalin E."/>
            <person name="Tice H."/>
            <person name="Pitluck S."/>
            <person name="Kiss H."/>
            <person name="Brettin T."/>
            <person name="Bruce D."/>
            <person name="Han C."/>
            <person name="Schmutz J."/>
            <person name="Larimer F."/>
            <person name="Land M."/>
            <person name="Hauser L."/>
            <person name="Kyrpides N."/>
            <person name="Lykidis A."/>
            <person name="van de Werken H.J.G."/>
            <person name="Verhaart M.R.A."/>
            <person name="VanFossen A.L."/>
            <person name="Lewis D.L."/>
            <person name="Nichols J.D."/>
            <person name="Goorissen H.P."/>
            <person name="van Niel E.W.J."/>
            <person name="Stams F.J.M."/>
            <person name="Willquist K.U."/>
            <person name="Ward D.E."/>
            <person name="van der Oost J."/>
            <person name="Kelly R.M."/>
            <person name="Kengen S.M.W."/>
            <person name="Richardson P."/>
        </authorList>
    </citation>
    <scope>NUCLEOTIDE SEQUENCE [LARGE SCALE GENOMIC DNA]</scope>
    <source>
        <strain>ATCC 43494 / DSM 8903 / Tp8T 6331</strain>
    </source>
</reference>
<accession>A4XJ48</accession>
<protein>
    <recommendedName>
        <fullName evidence="1">3-isopropylmalate dehydratase large subunit</fullName>
        <ecNumber evidence="1">4.2.1.33</ecNumber>
    </recommendedName>
    <alternativeName>
        <fullName evidence="1">Alpha-IPM isomerase</fullName>
        <shortName evidence="1">IPMI</shortName>
    </alternativeName>
    <alternativeName>
        <fullName evidence="1">Isopropylmalate isomerase</fullName>
    </alternativeName>
</protein>
<evidence type="ECO:0000255" key="1">
    <source>
        <dbReference type="HAMAP-Rule" id="MF_01027"/>
    </source>
</evidence>
<sequence>MSKPMTMSQKILAYHAGKEYVEPGDLIFANVDLVLGNDVTTPVAIKEFEKIGVDKVFDKDKITIVPDHFTPNKDIKSAQQCKMVREFAKKYDITNYFEVGEMGIEHALLPEKGLVVPGDLVIGADSHTCTYGALGAFSTGIGSTDMACAMATGKCWFKVPEAIKFVLYGKKTGWTSGKDIILHIIGMIGVDGALYKSMEYTGEGLKSLSMDDRFTIANMAIEAGAKNGIFEVDEKTIEYVKQHSTKPYKIFKADEDAEYSEVYEIDISKIRPTVAFPHLPENTKTIDEITEKIYIDQVVIGSCTNGRIEDLRIAAKILKGRKVKKGLRCIIFPATQNIYKQALKEGLIEIFIDAGCVVSTPTCGPCLGGHMGILAEGERALATTNRNFVGRMGHPNSEVYLSSPAIAAASAVLGYIGSPEELGMKGDEE</sequence>
<keyword id="KW-0004">4Fe-4S</keyword>
<keyword id="KW-0028">Amino-acid biosynthesis</keyword>
<keyword id="KW-0100">Branched-chain amino acid biosynthesis</keyword>
<keyword id="KW-0408">Iron</keyword>
<keyword id="KW-0411">Iron-sulfur</keyword>
<keyword id="KW-0432">Leucine biosynthesis</keyword>
<keyword id="KW-0456">Lyase</keyword>
<keyword id="KW-0479">Metal-binding</keyword>
<proteinExistence type="inferred from homology"/>
<feature type="chain" id="PRO_1000063639" description="3-isopropylmalate dehydratase large subunit">
    <location>
        <begin position="1"/>
        <end position="429"/>
    </location>
</feature>
<feature type="binding site" evidence="1">
    <location>
        <position position="303"/>
    </location>
    <ligand>
        <name>[4Fe-4S] cluster</name>
        <dbReference type="ChEBI" id="CHEBI:49883"/>
    </ligand>
</feature>
<feature type="binding site" evidence="1">
    <location>
        <position position="363"/>
    </location>
    <ligand>
        <name>[4Fe-4S] cluster</name>
        <dbReference type="ChEBI" id="CHEBI:49883"/>
    </ligand>
</feature>
<feature type="binding site" evidence="1">
    <location>
        <position position="366"/>
    </location>
    <ligand>
        <name>[4Fe-4S] cluster</name>
        <dbReference type="ChEBI" id="CHEBI:49883"/>
    </ligand>
</feature>
<gene>
    <name evidence="1" type="primary">leuC</name>
    <name type="ordered locus">Csac_1331</name>
</gene>